<reference key="1">
    <citation type="journal article" date="2010" name="J. Bacteriol.">
        <title>Whole genome sequences of two Xylella fastidiosa strains (M12 and M23) causing almond leaf scorch disease in California.</title>
        <authorList>
            <person name="Chen J."/>
            <person name="Xie G."/>
            <person name="Han S."/>
            <person name="Chertkov O."/>
            <person name="Sims D."/>
            <person name="Civerolo E.L."/>
        </authorList>
    </citation>
    <scope>NUCLEOTIDE SEQUENCE [LARGE SCALE GENOMIC DNA]</scope>
    <source>
        <strain>M23</strain>
    </source>
</reference>
<dbReference type="EC" id="2.6.99.2" evidence="1"/>
<dbReference type="EMBL" id="CP001011">
    <property type="protein sequence ID" value="ACB91496.1"/>
    <property type="molecule type" value="Genomic_DNA"/>
</dbReference>
<dbReference type="RefSeq" id="WP_004087143.1">
    <property type="nucleotide sequence ID" value="NC_010577.1"/>
</dbReference>
<dbReference type="SMR" id="B2I669"/>
<dbReference type="KEGG" id="xfn:XfasM23_0038"/>
<dbReference type="HOGENOM" id="CLU_074563_1_0_6"/>
<dbReference type="UniPathway" id="UPA00244">
    <property type="reaction ID" value="UER00313"/>
</dbReference>
<dbReference type="Proteomes" id="UP000001698">
    <property type="component" value="Chromosome"/>
</dbReference>
<dbReference type="GO" id="GO:0005829">
    <property type="term" value="C:cytosol"/>
    <property type="evidence" value="ECO:0007669"/>
    <property type="project" value="TreeGrafter"/>
</dbReference>
<dbReference type="GO" id="GO:0033856">
    <property type="term" value="F:pyridoxine 5'-phosphate synthase activity"/>
    <property type="evidence" value="ECO:0007669"/>
    <property type="project" value="UniProtKB-EC"/>
</dbReference>
<dbReference type="GO" id="GO:0008615">
    <property type="term" value="P:pyridoxine biosynthetic process"/>
    <property type="evidence" value="ECO:0007669"/>
    <property type="project" value="UniProtKB-UniRule"/>
</dbReference>
<dbReference type="CDD" id="cd00003">
    <property type="entry name" value="PNPsynthase"/>
    <property type="match status" value="1"/>
</dbReference>
<dbReference type="Gene3D" id="3.20.20.70">
    <property type="entry name" value="Aldolase class I"/>
    <property type="match status" value="1"/>
</dbReference>
<dbReference type="HAMAP" id="MF_00279">
    <property type="entry name" value="PdxJ"/>
    <property type="match status" value="1"/>
</dbReference>
<dbReference type="InterPro" id="IPR013785">
    <property type="entry name" value="Aldolase_TIM"/>
</dbReference>
<dbReference type="InterPro" id="IPR004569">
    <property type="entry name" value="PyrdxlP_synth_PdxJ"/>
</dbReference>
<dbReference type="InterPro" id="IPR036130">
    <property type="entry name" value="Pyridoxine-5'_phos_synth"/>
</dbReference>
<dbReference type="NCBIfam" id="TIGR00559">
    <property type="entry name" value="pdxJ"/>
    <property type="match status" value="1"/>
</dbReference>
<dbReference type="NCBIfam" id="NF003626">
    <property type="entry name" value="PRK05265.1-4"/>
    <property type="match status" value="1"/>
</dbReference>
<dbReference type="PANTHER" id="PTHR30456">
    <property type="entry name" value="PYRIDOXINE 5'-PHOSPHATE SYNTHASE"/>
    <property type="match status" value="1"/>
</dbReference>
<dbReference type="PANTHER" id="PTHR30456:SF0">
    <property type="entry name" value="PYRIDOXINE 5'-PHOSPHATE SYNTHASE"/>
    <property type="match status" value="1"/>
</dbReference>
<dbReference type="Pfam" id="PF03740">
    <property type="entry name" value="PdxJ"/>
    <property type="match status" value="1"/>
</dbReference>
<dbReference type="SUPFAM" id="SSF63892">
    <property type="entry name" value="Pyridoxine 5'-phosphate synthase"/>
    <property type="match status" value="1"/>
</dbReference>
<keyword id="KW-0963">Cytoplasm</keyword>
<keyword id="KW-0664">Pyridoxine biosynthesis</keyword>
<keyword id="KW-0808">Transferase</keyword>
<protein>
    <recommendedName>
        <fullName evidence="1">Pyridoxine 5'-phosphate synthase</fullName>
        <shortName evidence="1">PNP synthase</shortName>
        <ecNumber evidence="1">2.6.99.2</ecNumber>
    </recommendedName>
</protein>
<proteinExistence type="inferred from homology"/>
<gene>
    <name evidence="1" type="primary">pdxJ</name>
    <name type="ordered locus">XfasM23_0038</name>
</gene>
<evidence type="ECO:0000255" key="1">
    <source>
        <dbReference type="HAMAP-Rule" id="MF_00279"/>
    </source>
</evidence>
<organism>
    <name type="scientific">Xylella fastidiosa (strain M23)</name>
    <dbReference type="NCBI Taxonomy" id="405441"/>
    <lineage>
        <taxon>Bacteria</taxon>
        <taxon>Pseudomonadati</taxon>
        <taxon>Pseudomonadota</taxon>
        <taxon>Gammaproteobacteria</taxon>
        <taxon>Lysobacterales</taxon>
        <taxon>Lysobacteraceae</taxon>
        <taxon>Xylella</taxon>
    </lineage>
</organism>
<accession>B2I669</accession>
<comment type="function">
    <text evidence="1">Catalyzes the complicated ring closure reaction between the two acyclic compounds 1-deoxy-D-xylulose-5-phosphate (DXP) and 3-amino-2-oxopropyl phosphate (1-amino-acetone-3-phosphate or AAP) to form pyridoxine 5'-phosphate (PNP) and inorganic phosphate.</text>
</comment>
<comment type="catalytic activity">
    <reaction evidence="1">
        <text>3-amino-2-oxopropyl phosphate + 1-deoxy-D-xylulose 5-phosphate = pyridoxine 5'-phosphate + phosphate + 2 H2O + H(+)</text>
        <dbReference type="Rhea" id="RHEA:15265"/>
        <dbReference type="ChEBI" id="CHEBI:15377"/>
        <dbReference type="ChEBI" id="CHEBI:15378"/>
        <dbReference type="ChEBI" id="CHEBI:43474"/>
        <dbReference type="ChEBI" id="CHEBI:57279"/>
        <dbReference type="ChEBI" id="CHEBI:57792"/>
        <dbReference type="ChEBI" id="CHEBI:58589"/>
        <dbReference type="EC" id="2.6.99.2"/>
    </reaction>
</comment>
<comment type="pathway">
    <text evidence="1">Cofactor biosynthesis; pyridoxine 5'-phosphate biosynthesis; pyridoxine 5'-phosphate from D-erythrose 4-phosphate: step 5/5.</text>
</comment>
<comment type="subunit">
    <text evidence="1">Homooctamer; tetramer of dimers.</text>
</comment>
<comment type="subcellular location">
    <subcellularLocation>
        <location evidence="1">Cytoplasm</location>
    </subcellularLocation>
</comment>
<comment type="similarity">
    <text evidence="1">Belongs to the PNP synthase family.</text>
</comment>
<name>PDXJ_XYLF2</name>
<feature type="chain" id="PRO_1000114833" description="Pyridoxine 5'-phosphate synthase">
    <location>
        <begin position="1"/>
        <end position="260"/>
    </location>
</feature>
<feature type="active site" description="Proton acceptor" evidence="1">
    <location>
        <position position="46"/>
    </location>
</feature>
<feature type="active site" description="Proton acceptor" evidence="1">
    <location>
        <position position="76"/>
    </location>
</feature>
<feature type="active site" description="Proton donor" evidence="1">
    <location>
        <position position="204"/>
    </location>
</feature>
<feature type="binding site" evidence="1">
    <location>
        <position position="10"/>
    </location>
    <ligand>
        <name>3-amino-2-oxopropyl phosphate</name>
        <dbReference type="ChEBI" id="CHEBI:57279"/>
    </ligand>
</feature>
<feature type="binding site" evidence="1">
    <location>
        <position position="21"/>
    </location>
    <ligand>
        <name>3-amino-2-oxopropyl phosphate</name>
        <dbReference type="ChEBI" id="CHEBI:57279"/>
    </ligand>
</feature>
<feature type="binding site" evidence="1">
    <location>
        <position position="48"/>
    </location>
    <ligand>
        <name>1-deoxy-D-xylulose 5-phosphate</name>
        <dbReference type="ChEBI" id="CHEBI:57792"/>
    </ligand>
</feature>
<feature type="binding site" evidence="1">
    <location>
        <position position="53"/>
    </location>
    <ligand>
        <name>1-deoxy-D-xylulose 5-phosphate</name>
        <dbReference type="ChEBI" id="CHEBI:57792"/>
    </ligand>
</feature>
<feature type="binding site" evidence="1">
    <location>
        <position position="113"/>
    </location>
    <ligand>
        <name>1-deoxy-D-xylulose 5-phosphate</name>
        <dbReference type="ChEBI" id="CHEBI:57792"/>
    </ligand>
</feature>
<feature type="binding site" evidence="1">
    <location>
        <position position="205"/>
    </location>
    <ligand>
        <name>3-amino-2-oxopropyl phosphate</name>
        <dbReference type="ChEBI" id="CHEBI:57279"/>
    </ligand>
</feature>
<feature type="binding site" evidence="1">
    <location>
        <begin position="227"/>
        <end position="228"/>
    </location>
    <ligand>
        <name>3-amino-2-oxopropyl phosphate</name>
        <dbReference type="ChEBI" id="CHEBI:57279"/>
    </ligand>
</feature>
<feature type="site" description="Transition state stabilizer" evidence="1">
    <location>
        <position position="164"/>
    </location>
</feature>
<sequence length="260" mass="28149">MSQRTRLSVNVNKIAVLRNSRGHGAPDVIRAASACIDAGAHGITVHPRPDARHIRHDDVIRLSALTRARGVEFNIEGNPFAEPRAGYCGLLALCRETRPHQVTLVPDGDQQITSDHGFDFAREGPGLRPLIDEIKQWGCRVSLFVDVNVTGLADAAIWGVDRIELYTGPYAEMHHAGCSDAVLREFATTARLAQDVGLGVNAGHDLSQTNLGVFLGAVPDVLEVSIGHALISEALYEGLIPTVRRYLDILDSVNPAVSMR</sequence>